<accession>A4J7K8</accession>
<protein>
    <recommendedName>
        <fullName evidence="1">Redox-sensing transcriptional repressor Rex</fullName>
    </recommendedName>
</protein>
<gene>
    <name evidence="1" type="primary">rex</name>
    <name type="ordered locus">Dred_2551</name>
</gene>
<organism>
    <name type="scientific">Desulforamulus reducens (strain ATCC BAA-1160 / DSM 100696 / MI-1)</name>
    <name type="common">Desulfotomaculum reducens</name>
    <dbReference type="NCBI Taxonomy" id="349161"/>
    <lineage>
        <taxon>Bacteria</taxon>
        <taxon>Bacillati</taxon>
        <taxon>Bacillota</taxon>
        <taxon>Clostridia</taxon>
        <taxon>Eubacteriales</taxon>
        <taxon>Peptococcaceae</taxon>
        <taxon>Desulforamulus</taxon>
    </lineage>
</organism>
<sequence length="210" mass="23032">MKALKIPEATITRLSIYSRFLKRLDKKGITTVSSGDIAEGVGVSPAQVRKDLAYFGEFGTRGVGYNVKDLIRYTVKILGLSDPWNLVMVGAGNLGSALVTYREFKDRGFSIVGVFDNDLTKIGKRIADMEVLPLEELSRVVKEHNVRIGIIAVPSKAAQDIADIMVKAGLEALLNFAPISLNLPDDVEVRNVDLSVKLEILTFNLALKEK</sequence>
<name>REX_DESRM</name>
<reference key="1">
    <citation type="submission" date="2007-03" db="EMBL/GenBank/DDBJ databases">
        <title>Complete sequence of Desulfotomaculum reducens MI-1.</title>
        <authorList>
            <consortium name="US DOE Joint Genome Institute"/>
            <person name="Copeland A."/>
            <person name="Lucas S."/>
            <person name="Lapidus A."/>
            <person name="Barry K."/>
            <person name="Detter J.C."/>
            <person name="Glavina del Rio T."/>
            <person name="Hammon N."/>
            <person name="Israni S."/>
            <person name="Dalin E."/>
            <person name="Tice H."/>
            <person name="Pitluck S."/>
            <person name="Sims D."/>
            <person name="Brettin T."/>
            <person name="Bruce D."/>
            <person name="Han C."/>
            <person name="Tapia R."/>
            <person name="Schmutz J."/>
            <person name="Larimer F."/>
            <person name="Land M."/>
            <person name="Hauser L."/>
            <person name="Kyrpides N."/>
            <person name="Kim E."/>
            <person name="Tebo B.M."/>
            <person name="Richardson P."/>
        </authorList>
    </citation>
    <scope>NUCLEOTIDE SEQUENCE [LARGE SCALE GENOMIC DNA]</scope>
    <source>
        <strain>ATCC BAA-1160 / DSM 100696 / MI-1</strain>
    </source>
</reference>
<proteinExistence type="inferred from homology"/>
<evidence type="ECO:0000255" key="1">
    <source>
        <dbReference type="HAMAP-Rule" id="MF_01131"/>
    </source>
</evidence>
<feature type="chain" id="PRO_1000213636" description="Redox-sensing transcriptional repressor Rex">
    <location>
        <begin position="1"/>
        <end position="210"/>
    </location>
</feature>
<feature type="DNA-binding region" description="H-T-H motif" evidence="1">
    <location>
        <begin position="16"/>
        <end position="55"/>
    </location>
</feature>
<feature type="binding site" evidence="1">
    <location>
        <begin position="90"/>
        <end position="95"/>
    </location>
    <ligand>
        <name>NAD(+)</name>
        <dbReference type="ChEBI" id="CHEBI:57540"/>
    </ligand>
</feature>
<comment type="function">
    <text evidence="1">Modulates transcription in response to changes in cellular NADH/NAD(+) redox state.</text>
</comment>
<comment type="subunit">
    <text evidence="1">Homodimer.</text>
</comment>
<comment type="subcellular location">
    <subcellularLocation>
        <location evidence="1">Cytoplasm</location>
    </subcellularLocation>
</comment>
<comment type="similarity">
    <text evidence="1">Belongs to the transcriptional regulatory Rex family.</text>
</comment>
<dbReference type="EMBL" id="CP000612">
    <property type="protein sequence ID" value="ABO51061.1"/>
    <property type="molecule type" value="Genomic_DNA"/>
</dbReference>
<dbReference type="RefSeq" id="WP_011878859.1">
    <property type="nucleotide sequence ID" value="NC_009253.1"/>
</dbReference>
<dbReference type="SMR" id="A4J7K8"/>
<dbReference type="STRING" id="349161.Dred_2551"/>
<dbReference type="KEGG" id="drm:Dred_2551"/>
<dbReference type="eggNOG" id="COG2344">
    <property type="taxonomic scope" value="Bacteria"/>
</dbReference>
<dbReference type="HOGENOM" id="CLU_061534_0_1_9"/>
<dbReference type="OrthoDB" id="9784760at2"/>
<dbReference type="Proteomes" id="UP000001556">
    <property type="component" value="Chromosome"/>
</dbReference>
<dbReference type="GO" id="GO:0005737">
    <property type="term" value="C:cytoplasm"/>
    <property type="evidence" value="ECO:0007669"/>
    <property type="project" value="UniProtKB-SubCell"/>
</dbReference>
<dbReference type="GO" id="GO:0003677">
    <property type="term" value="F:DNA binding"/>
    <property type="evidence" value="ECO:0007669"/>
    <property type="project" value="UniProtKB-UniRule"/>
</dbReference>
<dbReference type="GO" id="GO:0003700">
    <property type="term" value="F:DNA-binding transcription factor activity"/>
    <property type="evidence" value="ECO:0007669"/>
    <property type="project" value="UniProtKB-UniRule"/>
</dbReference>
<dbReference type="GO" id="GO:0045892">
    <property type="term" value="P:negative regulation of DNA-templated transcription"/>
    <property type="evidence" value="ECO:0007669"/>
    <property type="project" value="InterPro"/>
</dbReference>
<dbReference type="GO" id="GO:0051775">
    <property type="term" value="P:response to redox state"/>
    <property type="evidence" value="ECO:0007669"/>
    <property type="project" value="InterPro"/>
</dbReference>
<dbReference type="Gene3D" id="3.40.50.720">
    <property type="entry name" value="NAD(P)-binding Rossmann-like Domain"/>
    <property type="match status" value="1"/>
</dbReference>
<dbReference type="Gene3D" id="1.10.10.10">
    <property type="entry name" value="Winged helix-like DNA-binding domain superfamily/Winged helix DNA-binding domain"/>
    <property type="match status" value="1"/>
</dbReference>
<dbReference type="HAMAP" id="MF_01131">
    <property type="entry name" value="Rex"/>
    <property type="match status" value="1"/>
</dbReference>
<dbReference type="InterPro" id="IPR003781">
    <property type="entry name" value="CoA-bd"/>
</dbReference>
<dbReference type="InterPro" id="IPR036291">
    <property type="entry name" value="NAD(P)-bd_dom_sf"/>
</dbReference>
<dbReference type="InterPro" id="IPR009718">
    <property type="entry name" value="Rex_DNA-bd_C_dom"/>
</dbReference>
<dbReference type="InterPro" id="IPR022876">
    <property type="entry name" value="Tscrpt_rep_Rex"/>
</dbReference>
<dbReference type="InterPro" id="IPR036388">
    <property type="entry name" value="WH-like_DNA-bd_sf"/>
</dbReference>
<dbReference type="InterPro" id="IPR036390">
    <property type="entry name" value="WH_DNA-bd_sf"/>
</dbReference>
<dbReference type="NCBIfam" id="NF003989">
    <property type="entry name" value="PRK05472.1-3"/>
    <property type="match status" value="1"/>
</dbReference>
<dbReference type="NCBIfam" id="NF003992">
    <property type="entry name" value="PRK05472.2-1"/>
    <property type="match status" value="1"/>
</dbReference>
<dbReference type="NCBIfam" id="NF003993">
    <property type="entry name" value="PRK05472.2-2"/>
    <property type="match status" value="1"/>
</dbReference>
<dbReference type="NCBIfam" id="NF003994">
    <property type="entry name" value="PRK05472.2-3"/>
    <property type="match status" value="1"/>
</dbReference>
<dbReference type="NCBIfam" id="NF003995">
    <property type="entry name" value="PRK05472.2-4"/>
    <property type="match status" value="1"/>
</dbReference>
<dbReference type="NCBIfam" id="NF003996">
    <property type="entry name" value="PRK05472.2-5"/>
    <property type="match status" value="1"/>
</dbReference>
<dbReference type="PANTHER" id="PTHR35786">
    <property type="entry name" value="REDOX-SENSING TRANSCRIPTIONAL REPRESSOR REX"/>
    <property type="match status" value="1"/>
</dbReference>
<dbReference type="PANTHER" id="PTHR35786:SF1">
    <property type="entry name" value="REDOX-SENSING TRANSCRIPTIONAL REPRESSOR REX 1"/>
    <property type="match status" value="1"/>
</dbReference>
<dbReference type="Pfam" id="PF02629">
    <property type="entry name" value="CoA_binding"/>
    <property type="match status" value="1"/>
</dbReference>
<dbReference type="Pfam" id="PF06971">
    <property type="entry name" value="Put_DNA-bind_N"/>
    <property type="match status" value="1"/>
</dbReference>
<dbReference type="SMART" id="SM00881">
    <property type="entry name" value="CoA_binding"/>
    <property type="match status" value="1"/>
</dbReference>
<dbReference type="SUPFAM" id="SSF51735">
    <property type="entry name" value="NAD(P)-binding Rossmann-fold domains"/>
    <property type="match status" value="1"/>
</dbReference>
<dbReference type="SUPFAM" id="SSF46785">
    <property type="entry name" value="Winged helix' DNA-binding domain"/>
    <property type="match status" value="1"/>
</dbReference>
<keyword id="KW-0963">Cytoplasm</keyword>
<keyword id="KW-0238">DNA-binding</keyword>
<keyword id="KW-0520">NAD</keyword>
<keyword id="KW-1185">Reference proteome</keyword>
<keyword id="KW-0678">Repressor</keyword>
<keyword id="KW-0804">Transcription</keyword>
<keyword id="KW-0805">Transcription regulation</keyword>